<gene>
    <name evidence="1" type="primary">thyA2</name>
    <name type="synonym">thyB</name>
    <name type="ordered locus">BSU21820</name>
</gene>
<reference key="1">
    <citation type="journal article" date="1988" name="Gene">
        <title>Nucleotide sequence of the thymidylate synthase B and dihydrofolate reductase genes contained in one Bacillus subtilis operon.</title>
        <authorList>
            <person name="Iwakura M."/>
            <person name="Kawata M."/>
            <person name="Tsuda K."/>
            <person name="Tanaka T."/>
        </authorList>
    </citation>
    <scope>NUCLEOTIDE SEQUENCE [GENOMIC DNA]</scope>
    <source>
        <strain>168</strain>
    </source>
</reference>
<reference key="2">
    <citation type="journal article" date="1996" name="Microbiology">
        <title>Organization of the Bacillus subtilis 168 chromosome between kdg and the attachment site of the SP beta prophage: use of long accurate PCR and yeast artificial chromosomes for sequencing.</title>
        <authorList>
            <person name="Capuano V."/>
            <person name="Galleron N."/>
            <person name="Pujic P."/>
            <person name="Sorokin A."/>
            <person name="Ehrlich S.D."/>
        </authorList>
    </citation>
    <scope>NUCLEOTIDE SEQUENCE [GENOMIC DNA]</scope>
    <source>
        <strain>168 / Marburg / ATCC 6051 / DSM 10 / JCM 1465 / NBRC 13719 / NCIMB 3610 / NRRL NRS-744 / VKM B-501</strain>
    </source>
</reference>
<reference key="3">
    <citation type="journal article" date="1993" name="Mol. Gen. Genet.">
        <title>Heat-stable and heat-labile thymidylate synthases B of Bacillus subtilis: comparison of the nucleotide and amino acid sequences.</title>
        <authorList>
            <person name="Montorsi M."/>
            <person name="Lorenzetti R."/>
        </authorList>
    </citation>
    <scope>NUCLEOTIDE SEQUENCE [GENOMIC DNA]</scope>
    <source>
        <strain>168</strain>
        <strain>ATCC 6633 / PCI 219 / NRS 231</strain>
    </source>
</reference>
<reference key="4">
    <citation type="journal article" date="1997" name="Nature">
        <title>The complete genome sequence of the Gram-positive bacterium Bacillus subtilis.</title>
        <authorList>
            <person name="Kunst F."/>
            <person name="Ogasawara N."/>
            <person name="Moszer I."/>
            <person name="Albertini A.M."/>
            <person name="Alloni G."/>
            <person name="Azevedo V."/>
            <person name="Bertero M.G."/>
            <person name="Bessieres P."/>
            <person name="Bolotin A."/>
            <person name="Borchert S."/>
            <person name="Borriss R."/>
            <person name="Boursier L."/>
            <person name="Brans A."/>
            <person name="Braun M."/>
            <person name="Brignell S.C."/>
            <person name="Bron S."/>
            <person name="Brouillet S."/>
            <person name="Bruschi C.V."/>
            <person name="Caldwell B."/>
            <person name="Capuano V."/>
            <person name="Carter N.M."/>
            <person name="Choi S.-K."/>
            <person name="Codani J.-J."/>
            <person name="Connerton I.F."/>
            <person name="Cummings N.J."/>
            <person name="Daniel R.A."/>
            <person name="Denizot F."/>
            <person name="Devine K.M."/>
            <person name="Duesterhoeft A."/>
            <person name="Ehrlich S.D."/>
            <person name="Emmerson P.T."/>
            <person name="Entian K.-D."/>
            <person name="Errington J."/>
            <person name="Fabret C."/>
            <person name="Ferrari E."/>
            <person name="Foulger D."/>
            <person name="Fritz C."/>
            <person name="Fujita M."/>
            <person name="Fujita Y."/>
            <person name="Fuma S."/>
            <person name="Galizzi A."/>
            <person name="Galleron N."/>
            <person name="Ghim S.-Y."/>
            <person name="Glaser P."/>
            <person name="Goffeau A."/>
            <person name="Golightly E.J."/>
            <person name="Grandi G."/>
            <person name="Guiseppi G."/>
            <person name="Guy B.J."/>
            <person name="Haga K."/>
            <person name="Haiech J."/>
            <person name="Harwood C.R."/>
            <person name="Henaut A."/>
            <person name="Hilbert H."/>
            <person name="Holsappel S."/>
            <person name="Hosono S."/>
            <person name="Hullo M.-F."/>
            <person name="Itaya M."/>
            <person name="Jones L.-M."/>
            <person name="Joris B."/>
            <person name="Karamata D."/>
            <person name="Kasahara Y."/>
            <person name="Klaerr-Blanchard M."/>
            <person name="Klein C."/>
            <person name="Kobayashi Y."/>
            <person name="Koetter P."/>
            <person name="Koningstein G."/>
            <person name="Krogh S."/>
            <person name="Kumano M."/>
            <person name="Kurita K."/>
            <person name="Lapidus A."/>
            <person name="Lardinois S."/>
            <person name="Lauber J."/>
            <person name="Lazarevic V."/>
            <person name="Lee S.-M."/>
            <person name="Levine A."/>
            <person name="Liu H."/>
            <person name="Masuda S."/>
            <person name="Mauel C."/>
            <person name="Medigue C."/>
            <person name="Medina N."/>
            <person name="Mellado R.P."/>
            <person name="Mizuno M."/>
            <person name="Moestl D."/>
            <person name="Nakai S."/>
            <person name="Noback M."/>
            <person name="Noone D."/>
            <person name="O'Reilly M."/>
            <person name="Ogawa K."/>
            <person name="Ogiwara A."/>
            <person name="Oudega B."/>
            <person name="Park S.-H."/>
            <person name="Parro V."/>
            <person name="Pohl T.M."/>
            <person name="Portetelle D."/>
            <person name="Porwollik S."/>
            <person name="Prescott A.M."/>
            <person name="Presecan E."/>
            <person name="Pujic P."/>
            <person name="Purnelle B."/>
            <person name="Rapoport G."/>
            <person name="Rey M."/>
            <person name="Reynolds S."/>
            <person name="Rieger M."/>
            <person name="Rivolta C."/>
            <person name="Rocha E."/>
            <person name="Roche B."/>
            <person name="Rose M."/>
            <person name="Sadaie Y."/>
            <person name="Sato T."/>
            <person name="Scanlan E."/>
            <person name="Schleich S."/>
            <person name="Schroeter R."/>
            <person name="Scoffone F."/>
            <person name="Sekiguchi J."/>
            <person name="Sekowska A."/>
            <person name="Seror S.J."/>
            <person name="Serror P."/>
            <person name="Shin B.-S."/>
            <person name="Soldo B."/>
            <person name="Sorokin A."/>
            <person name="Tacconi E."/>
            <person name="Takagi T."/>
            <person name="Takahashi H."/>
            <person name="Takemaru K."/>
            <person name="Takeuchi M."/>
            <person name="Tamakoshi A."/>
            <person name="Tanaka T."/>
            <person name="Terpstra P."/>
            <person name="Tognoni A."/>
            <person name="Tosato V."/>
            <person name="Uchiyama S."/>
            <person name="Vandenbol M."/>
            <person name="Vannier F."/>
            <person name="Vassarotti A."/>
            <person name="Viari A."/>
            <person name="Wambutt R."/>
            <person name="Wedler E."/>
            <person name="Wedler H."/>
            <person name="Weitzenegger T."/>
            <person name="Winters P."/>
            <person name="Wipat A."/>
            <person name="Yamamoto H."/>
            <person name="Yamane K."/>
            <person name="Yasumoto K."/>
            <person name="Yata K."/>
            <person name="Yoshida K."/>
            <person name="Yoshikawa H.-F."/>
            <person name="Zumstein E."/>
            <person name="Yoshikawa H."/>
            <person name="Danchin A."/>
        </authorList>
    </citation>
    <scope>NUCLEOTIDE SEQUENCE [LARGE SCALE GENOMIC DNA]</scope>
    <source>
        <strain>168</strain>
    </source>
</reference>
<comment type="function">
    <text evidence="1">Catalyzes the reductive methylation of 2'-deoxyuridine-5'-monophosphate (dUMP) to 2'-deoxythymidine-5'-monophosphate (dTMP) while utilizing 5,10-methylenetetrahydrofolate (mTHF) as the methyl donor and reductant in the reaction, yielding dihydrofolate (DHF) as a by-product. This enzymatic reaction provides an intracellular de novo source of dTMP, an essential precursor for DNA biosynthesis.</text>
</comment>
<comment type="catalytic activity">
    <reaction evidence="1">
        <text>dUMP + (6R)-5,10-methylene-5,6,7,8-tetrahydrofolate = 7,8-dihydrofolate + dTMP</text>
        <dbReference type="Rhea" id="RHEA:12104"/>
        <dbReference type="ChEBI" id="CHEBI:15636"/>
        <dbReference type="ChEBI" id="CHEBI:57451"/>
        <dbReference type="ChEBI" id="CHEBI:63528"/>
        <dbReference type="ChEBI" id="CHEBI:246422"/>
        <dbReference type="EC" id="2.1.1.45"/>
    </reaction>
</comment>
<comment type="biophysicochemical properties">
    <temperatureDependence>
        <text>Thermolabile. Inactive at 46 degrees Celsius.</text>
    </temperatureDependence>
</comment>
<comment type="pathway">
    <text evidence="1">Pyrimidine metabolism; dTTP biosynthesis.</text>
</comment>
<comment type="subunit">
    <text evidence="1">Homodimer.</text>
</comment>
<comment type="subcellular location">
    <subcellularLocation>
        <location evidence="1">Cytoplasm</location>
    </subcellularLocation>
</comment>
<comment type="miscellaneous">
    <text>B.subtilis strain 168 possesses two thymidylate synthases, a major form ThyA and a minor form ThyB.</text>
</comment>
<comment type="similarity">
    <text evidence="1">Belongs to the thymidylate synthase family. Bacterial-type ThyA subfamily.</text>
</comment>
<evidence type="ECO:0000255" key="1">
    <source>
        <dbReference type="HAMAP-Rule" id="MF_00008"/>
    </source>
</evidence>
<evidence type="ECO:0000303" key="2">
    <source>
    </source>
</evidence>
<feature type="chain" id="PRO_0000140932" description="Thymidylate synthase 2">
    <location>
        <begin position="1"/>
        <end position="264"/>
    </location>
</feature>
<feature type="active site" description="Nucleophile" evidence="1">
    <location>
        <position position="146"/>
    </location>
</feature>
<feature type="binding site" description="in other chain" evidence="1">
    <location>
        <position position="21"/>
    </location>
    <ligand>
        <name>dUMP</name>
        <dbReference type="ChEBI" id="CHEBI:246422"/>
        <note>ligand shared between dimeric partners</note>
    </ligand>
</feature>
<feature type="binding site" evidence="1">
    <location>
        <position position="51"/>
    </location>
    <ligand>
        <name>(6R)-5,10-methylene-5,6,7,8-tetrahydrofolate</name>
        <dbReference type="ChEBI" id="CHEBI:15636"/>
    </ligand>
</feature>
<feature type="binding site" evidence="1">
    <location>
        <begin position="126"/>
        <end position="127"/>
    </location>
    <ligand>
        <name>dUMP</name>
        <dbReference type="ChEBI" id="CHEBI:246422"/>
        <note>ligand shared between dimeric partners</note>
    </ligand>
</feature>
<feature type="binding site" description="in other chain" evidence="1">
    <location>
        <begin position="166"/>
        <end position="169"/>
    </location>
    <ligand>
        <name>dUMP</name>
        <dbReference type="ChEBI" id="CHEBI:246422"/>
        <note>ligand shared between dimeric partners</note>
    </ligand>
</feature>
<feature type="binding site" evidence="1">
    <location>
        <position position="169"/>
    </location>
    <ligand>
        <name>(6R)-5,10-methylene-5,6,7,8-tetrahydrofolate</name>
        <dbReference type="ChEBI" id="CHEBI:15636"/>
    </ligand>
</feature>
<feature type="binding site" description="in other chain" evidence="1">
    <location>
        <position position="177"/>
    </location>
    <ligand>
        <name>dUMP</name>
        <dbReference type="ChEBI" id="CHEBI:246422"/>
        <note>ligand shared between dimeric partners</note>
    </ligand>
</feature>
<feature type="binding site" description="in other chain" evidence="1">
    <location>
        <begin position="207"/>
        <end position="209"/>
    </location>
    <ligand>
        <name>dUMP</name>
        <dbReference type="ChEBI" id="CHEBI:246422"/>
        <note>ligand shared between dimeric partners</note>
    </ligand>
</feature>
<feature type="binding site" evidence="1">
    <location>
        <position position="263"/>
    </location>
    <ligand>
        <name>(6R)-5,10-methylene-5,6,7,8-tetrahydrofolate</name>
        <dbReference type="ChEBI" id="CHEBI:15636"/>
    </ligand>
</feature>
<feature type="sequence variant" description="In strain: ATCC 6633.">
    <original>F</original>
    <variation>L</variation>
    <location>
        <position position="7"/>
    </location>
</feature>
<feature type="sequence variant" description="In strain: ATCC 6633.">
    <original>N</original>
    <variation>H</variation>
    <location>
        <position position="37"/>
    </location>
</feature>
<feature type="sequence variant" description="In strain: ATCC 6633.">
    <original>R</original>
    <variation>Q</variation>
    <location>
        <position position="39"/>
    </location>
</feature>
<feature type="sequence variant" description="In strain: ATCC 6633.">
    <original>I</original>
    <variation>M</variation>
    <location>
        <position position="187"/>
    </location>
</feature>
<feature type="sequence variant" description="In strain: ATCC 6633.">
    <original>E</original>
    <variation>T</variation>
    <location>
        <position position="221"/>
    </location>
</feature>
<feature type="sequence variant" description="In strain: ATCC 6633.">
    <original>V</original>
    <variation>L</variation>
    <location>
        <position position="224"/>
    </location>
</feature>
<feature type="sequence variant" description="In strain: ATCC 6633.">
    <original>Q</original>
    <variation>K</variation>
    <location>
        <position position="229"/>
    </location>
</feature>
<feature type="sequence variant" description="In strain: ATCC 6633.">
    <original>KV</original>
    <variation>EI</variation>
    <location>
        <begin position="235"/>
        <end position="236"/>
    </location>
</feature>
<name>TYSY2_BACSU</name>
<organism>
    <name type="scientific">Bacillus subtilis (strain 168)</name>
    <dbReference type="NCBI Taxonomy" id="224308"/>
    <lineage>
        <taxon>Bacteria</taxon>
        <taxon>Bacillati</taxon>
        <taxon>Bacillota</taxon>
        <taxon>Bacilli</taxon>
        <taxon>Bacillales</taxon>
        <taxon>Bacillaceae</taxon>
        <taxon>Bacillus</taxon>
    </lineage>
</organism>
<dbReference type="EC" id="2.1.1.45" evidence="1"/>
<dbReference type="EMBL" id="X69661">
    <property type="protein sequence ID" value="CAA49350.1"/>
    <property type="molecule type" value="Genomic_DNA"/>
</dbReference>
<dbReference type="EMBL" id="L77246">
    <property type="protein sequence ID" value="AAA96634.1"/>
    <property type="molecule type" value="Genomic_DNA"/>
</dbReference>
<dbReference type="EMBL" id="M20012">
    <property type="protein sequence ID" value="AAA22852.1"/>
    <property type="molecule type" value="Genomic_DNA"/>
</dbReference>
<dbReference type="EMBL" id="AL009126">
    <property type="protein sequence ID" value="CAB14100.1"/>
    <property type="molecule type" value="Genomic_DNA"/>
</dbReference>
<dbReference type="PIR" id="JT0290">
    <property type="entry name" value="SYBSTB"/>
</dbReference>
<dbReference type="PIR" id="S35239">
    <property type="entry name" value="S35239"/>
</dbReference>
<dbReference type="RefSeq" id="NP_390065.1">
    <property type="nucleotide sequence ID" value="NC_000964.3"/>
</dbReference>
<dbReference type="RefSeq" id="WP_004398587.1">
    <property type="nucleotide sequence ID" value="NZ_OZ025638.1"/>
</dbReference>
<dbReference type="SMR" id="P11044"/>
<dbReference type="FunCoup" id="P11044">
    <property type="interactions" value="432"/>
</dbReference>
<dbReference type="IntAct" id="P11044">
    <property type="interactions" value="6"/>
</dbReference>
<dbReference type="STRING" id="224308.BSU21820"/>
<dbReference type="PaxDb" id="224308-BSU21820"/>
<dbReference type="EnsemblBacteria" id="CAB14100">
    <property type="protein sequence ID" value="CAB14100"/>
    <property type="gene ID" value="BSU_21820"/>
</dbReference>
<dbReference type="GeneID" id="939092"/>
<dbReference type="KEGG" id="bsu:BSU21820"/>
<dbReference type="PATRIC" id="fig|224308.179.peg.2384"/>
<dbReference type="eggNOG" id="COG0207">
    <property type="taxonomic scope" value="Bacteria"/>
</dbReference>
<dbReference type="InParanoid" id="P11044"/>
<dbReference type="OrthoDB" id="9774633at2"/>
<dbReference type="PhylomeDB" id="P11044"/>
<dbReference type="BioCyc" id="BSUB:BSU21820-MONOMER"/>
<dbReference type="SABIO-RK" id="P11044"/>
<dbReference type="UniPathway" id="UPA00575"/>
<dbReference type="Proteomes" id="UP000001570">
    <property type="component" value="Chromosome"/>
</dbReference>
<dbReference type="GO" id="GO:0005829">
    <property type="term" value="C:cytosol"/>
    <property type="evidence" value="ECO:0000318"/>
    <property type="project" value="GO_Central"/>
</dbReference>
<dbReference type="GO" id="GO:0004799">
    <property type="term" value="F:thymidylate synthase activity"/>
    <property type="evidence" value="ECO:0000318"/>
    <property type="project" value="GO_Central"/>
</dbReference>
<dbReference type="GO" id="GO:0006231">
    <property type="term" value="P:dTMP biosynthetic process"/>
    <property type="evidence" value="ECO:0000318"/>
    <property type="project" value="GO_Central"/>
</dbReference>
<dbReference type="GO" id="GO:0006235">
    <property type="term" value="P:dTTP biosynthetic process"/>
    <property type="evidence" value="ECO:0007669"/>
    <property type="project" value="UniProtKB-UniRule"/>
</dbReference>
<dbReference type="GO" id="GO:0032259">
    <property type="term" value="P:methylation"/>
    <property type="evidence" value="ECO:0007669"/>
    <property type="project" value="UniProtKB-KW"/>
</dbReference>
<dbReference type="CDD" id="cd00351">
    <property type="entry name" value="TS_Pyrimidine_HMase"/>
    <property type="match status" value="1"/>
</dbReference>
<dbReference type="FunFam" id="3.30.572.10:FF:000001">
    <property type="entry name" value="Thymidylate synthase"/>
    <property type="match status" value="1"/>
</dbReference>
<dbReference type="Gene3D" id="3.30.572.10">
    <property type="entry name" value="Thymidylate synthase/dCMP hydroxymethylase domain"/>
    <property type="match status" value="1"/>
</dbReference>
<dbReference type="HAMAP" id="MF_00008">
    <property type="entry name" value="Thymidy_synth_bact"/>
    <property type="match status" value="1"/>
</dbReference>
<dbReference type="InterPro" id="IPR045097">
    <property type="entry name" value="Thymidate_synth/dCMP_Mease"/>
</dbReference>
<dbReference type="InterPro" id="IPR023451">
    <property type="entry name" value="Thymidate_synth/dCMP_Mease_dom"/>
</dbReference>
<dbReference type="InterPro" id="IPR036926">
    <property type="entry name" value="Thymidate_synth/dCMP_Mease_sf"/>
</dbReference>
<dbReference type="InterPro" id="IPR000398">
    <property type="entry name" value="Thymidylate_synthase"/>
</dbReference>
<dbReference type="InterPro" id="IPR020940">
    <property type="entry name" value="Thymidylate_synthase_AS"/>
</dbReference>
<dbReference type="NCBIfam" id="NF002497">
    <property type="entry name" value="PRK01827.1-3"/>
    <property type="match status" value="1"/>
</dbReference>
<dbReference type="NCBIfam" id="NF002499">
    <property type="entry name" value="PRK01827.1-5"/>
    <property type="match status" value="1"/>
</dbReference>
<dbReference type="NCBIfam" id="TIGR03284">
    <property type="entry name" value="thym_sym"/>
    <property type="match status" value="2"/>
</dbReference>
<dbReference type="PANTHER" id="PTHR11548:SF9">
    <property type="entry name" value="THYMIDYLATE SYNTHASE"/>
    <property type="match status" value="1"/>
</dbReference>
<dbReference type="PANTHER" id="PTHR11548">
    <property type="entry name" value="THYMIDYLATE SYNTHASE 1"/>
    <property type="match status" value="1"/>
</dbReference>
<dbReference type="Pfam" id="PF00303">
    <property type="entry name" value="Thymidylat_synt"/>
    <property type="match status" value="1"/>
</dbReference>
<dbReference type="PRINTS" id="PR00108">
    <property type="entry name" value="THYMDSNTHASE"/>
</dbReference>
<dbReference type="SUPFAM" id="SSF55831">
    <property type="entry name" value="Thymidylate synthase/dCMP hydroxymethylase"/>
    <property type="match status" value="1"/>
</dbReference>
<dbReference type="PROSITE" id="PS00091">
    <property type="entry name" value="THYMIDYLATE_SYNTHASE"/>
    <property type="match status" value="1"/>
</dbReference>
<accession>P11044</accession>
<proteinExistence type="evidence at protein level"/>
<protein>
    <recommendedName>
        <fullName evidence="1">Thymidylate synthase 2</fullName>
        <shortName evidence="1">TS 2</shortName>
        <shortName evidence="1">TSase 2</shortName>
        <ecNumber evidence="1">2.1.1.45</ecNumber>
    </recommendedName>
    <alternativeName>
        <fullName evidence="2">Thymidylate synthase A</fullName>
        <shortName evidence="2">TS A</shortName>
        <shortName evidence="2">TSase A</shortName>
    </alternativeName>
</protein>
<sequence length="264" mass="30538">MKQYKDFCRHVLEHGEKKGDRTGTGTISTFGYQMRFNLREGFPMLTTKKLHFKSIAHELLWFLKGDTNVRYLQENGVRIWNEWADENGELGPVYGSQWRSWRGADGETIDQISRLIEDIKTNPNSRRLIVSAWNVGEIDKMALPPCHCLFQFYVSDGKLSCQLYQRSADVFLGVPFNIASYALLTMIIAHVTGLEPGEFIHTFGDVHIYQNHIEQVNLQLERDVRPLPQLRFARKVDSIFNFAFEDFIIEDYDPHPHIKGAVSV</sequence>
<keyword id="KW-0963">Cytoplasm</keyword>
<keyword id="KW-0489">Methyltransferase</keyword>
<keyword id="KW-0545">Nucleotide biosynthesis</keyword>
<keyword id="KW-1185">Reference proteome</keyword>
<keyword id="KW-0808">Transferase</keyword>